<feature type="chain" id="PRO_1000200841" description="23S rRNA (uracil(1939)-C(5))-methyltransferase RlmD">
    <location>
        <begin position="1"/>
        <end position="432"/>
    </location>
</feature>
<feature type="domain" description="TRAM" evidence="1">
    <location>
        <begin position="10"/>
        <end position="68"/>
    </location>
</feature>
<feature type="active site" description="Nucleophile" evidence="1">
    <location>
        <position position="389"/>
    </location>
</feature>
<feature type="binding site" evidence="1">
    <location>
        <position position="81"/>
    </location>
    <ligand>
        <name>[4Fe-4S] cluster</name>
        <dbReference type="ChEBI" id="CHEBI:49883"/>
    </ligand>
</feature>
<feature type="binding site" evidence="1">
    <location>
        <position position="87"/>
    </location>
    <ligand>
        <name>[4Fe-4S] cluster</name>
        <dbReference type="ChEBI" id="CHEBI:49883"/>
    </ligand>
</feature>
<feature type="binding site" evidence="1">
    <location>
        <position position="90"/>
    </location>
    <ligand>
        <name>[4Fe-4S] cluster</name>
        <dbReference type="ChEBI" id="CHEBI:49883"/>
    </ligand>
</feature>
<feature type="binding site" evidence="1">
    <location>
        <position position="162"/>
    </location>
    <ligand>
        <name>[4Fe-4S] cluster</name>
        <dbReference type="ChEBI" id="CHEBI:49883"/>
    </ligand>
</feature>
<feature type="binding site" evidence="1">
    <location>
        <position position="265"/>
    </location>
    <ligand>
        <name>S-adenosyl-L-methionine</name>
        <dbReference type="ChEBI" id="CHEBI:59789"/>
    </ligand>
</feature>
<feature type="binding site" evidence="1">
    <location>
        <position position="294"/>
    </location>
    <ligand>
        <name>S-adenosyl-L-methionine</name>
        <dbReference type="ChEBI" id="CHEBI:59789"/>
    </ligand>
</feature>
<feature type="binding site" evidence="1">
    <location>
        <position position="299"/>
    </location>
    <ligand>
        <name>S-adenosyl-L-methionine</name>
        <dbReference type="ChEBI" id="CHEBI:59789"/>
    </ligand>
</feature>
<feature type="binding site" evidence="1">
    <location>
        <position position="315"/>
    </location>
    <ligand>
        <name>S-adenosyl-L-methionine</name>
        <dbReference type="ChEBI" id="CHEBI:59789"/>
    </ligand>
</feature>
<feature type="binding site" evidence="1">
    <location>
        <position position="342"/>
    </location>
    <ligand>
        <name>S-adenosyl-L-methionine</name>
        <dbReference type="ChEBI" id="CHEBI:59789"/>
    </ligand>
</feature>
<feature type="binding site" evidence="1">
    <location>
        <position position="363"/>
    </location>
    <ligand>
        <name>S-adenosyl-L-methionine</name>
        <dbReference type="ChEBI" id="CHEBI:59789"/>
    </ligand>
</feature>
<gene>
    <name evidence="1" type="primary">rlmD</name>
    <name type="synonym">rumA</name>
    <name type="ordered locus">ESA_00518</name>
</gene>
<organism>
    <name type="scientific">Cronobacter sakazakii (strain ATCC BAA-894)</name>
    <name type="common">Enterobacter sakazakii</name>
    <dbReference type="NCBI Taxonomy" id="290339"/>
    <lineage>
        <taxon>Bacteria</taxon>
        <taxon>Pseudomonadati</taxon>
        <taxon>Pseudomonadota</taxon>
        <taxon>Gammaproteobacteria</taxon>
        <taxon>Enterobacterales</taxon>
        <taxon>Enterobacteriaceae</taxon>
        <taxon>Cronobacter</taxon>
    </lineage>
</organism>
<dbReference type="EC" id="2.1.1.190" evidence="1"/>
<dbReference type="EMBL" id="CP000783">
    <property type="protein sequence ID" value="ABU75809.1"/>
    <property type="molecule type" value="Genomic_DNA"/>
</dbReference>
<dbReference type="RefSeq" id="WP_012123916.1">
    <property type="nucleotide sequence ID" value="NC_009778.1"/>
</dbReference>
<dbReference type="SMR" id="A7MQZ8"/>
<dbReference type="KEGG" id="esa:ESA_00518"/>
<dbReference type="PATRIC" id="fig|290339.8.peg.466"/>
<dbReference type="HOGENOM" id="CLU_014689_8_2_6"/>
<dbReference type="Proteomes" id="UP000000260">
    <property type="component" value="Chromosome"/>
</dbReference>
<dbReference type="GO" id="GO:0051539">
    <property type="term" value="F:4 iron, 4 sulfur cluster binding"/>
    <property type="evidence" value="ECO:0007669"/>
    <property type="project" value="UniProtKB-KW"/>
</dbReference>
<dbReference type="GO" id="GO:0005506">
    <property type="term" value="F:iron ion binding"/>
    <property type="evidence" value="ECO:0007669"/>
    <property type="project" value="UniProtKB-UniRule"/>
</dbReference>
<dbReference type="GO" id="GO:0003723">
    <property type="term" value="F:RNA binding"/>
    <property type="evidence" value="ECO:0007669"/>
    <property type="project" value="InterPro"/>
</dbReference>
<dbReference type="GO" id="GO:0070041">
    <property type="term" value="F:rRNA (uridine-C5-)-methyltransferase activity"/>
    <property type="evidence" value="ECO:0007669"/>
    <property type="project" value="UniProtKB-UniRule"/>
</dbReference>
<dbReference type="GO" id="GO:0070475">
    <property type="term" value="P:rRNA base methylation"/>
    <property type="evidence" value="ECO:0007669"/>
    <property type="project" value="TreeGrafter"/>
</dbReference>
<dbReference type="CDD" id="cd02440">
    <property type="entry name" value="AdoMet_MTases"/>
    <property type="match status" value="1"/>
</dbReference>
<dbReference type="FunFam" id="3.40.50.150:FF:000009">
    <property type="entry name" value="23S rRNA (Uracil(1939)-C(5))-methyltransferase RlmD"/>
    <property type="match status" value="1"/>
</dbReference>
<dbReference type="FunFam" id="2.40.50.1070:FF:000004">
    <property type="entry name" value="23S rRNA (uracil(1939)-C(5))-methyltransferase RlmD"/>
    <property type="match status" value="1"/>
</dbReference>
<dbReference type="FunFam" id="2.40.50.140:FF:000097">
    <property type="entry name" value="23S rRNA (uracil(1939)-C(5))-methyltransferase RlmD"/>
    <property type="match status" value="1"/>
</dbReference>
<dbReference type="Gene3D" id="2.40.50.1070">
    <property type="match status" value="1"/>
</dbReference>
<dbReference type="Gene3D" id="2.40.50.140">
    <property type="entry name" value="Nucleic acid-binding proteins"/>
    <property type="match status" value="1"/>
</dbReference>
<dbReference type="Gene3D" id="3.40.50.150">
    <property type="entry name" value="Vaccinia Virus protein VP39"/>
    <property type="match status" value="1"/>
</dbReference>
<dbReference type="HAMAP" id="MF_01010">
    <property type="entry name" value="23SrRNA_methyltr_RlmD"/>
    <property type="match status" value="1"/>
</dbReference>
<dbReference type="InterPro" id="IPR001566">
    <property type="entry name" value="23S_rRNA_MeTrfase_RlmD"/>
</dbReference>
<dbReference type="InterPro" id="IPR030390">
    <property type="entry name" value="MeTrfase_TrmA_AS"/>
</dbReference>
<dbReference type="InterPro" id="IPR030391">
    <property type="entry name" value="MeTrfase_TrmA_CS"/>
</dbReference>
<dbReference type="InterPro" id="IPR012340">
    <property type="entry name" value="NA-bd_OB-fold"/>
</dbReference>
<dbReference type="InterPro" id="IPR029063">
    <property type="entry name" value="SAM-dependent_MTases_sf"/>
</dbReference>
<dbReference type="InterPro" id="IPR002792">
    <property type="entry name" value="TRAM_dom"/>
</dbReference>
<dbReference type="InterPro" id="IPR010280">
    <property type="entry name" value="U5_MeTrfase_fam"/>
</dbReference>
<dbReference type="NCBIfam" id="NF009639">
    <property type="entry name" value="PRK13168.1"/>
    <property type="match status" value="1"/>
</dbReference>
<dbReference type="NCBIfam" id="TIGR00479">
    <property type="entry name" value="rumA"/>
    <property type="match status" value="1"/>
</dbReference>
<dbReference type="PANTHER" id="PTHR11061:SF49">
    <property type="entry name" value="23S RRNA (URACIL(1939)-C(5))-METHYLTRANSFERASE RLMD"/>
    <property type="match status" value="1"/>
</dbReference>
<dbReference type="PANTHER" id="PTHR11061">
    <property type="entry name" value="RNA M5U METHYLTRANSFERASE"/>
    <property type="match status" value="1"/>
</dbReference>
<dbReference type="Pfam" id="PF01938">
    <property type="entry name" value="TRAM"/>
    <property type="match status" value="1"/>
</dbReference>
<dbReference type="Pfam" id="PF05958">
    <property type="entry name" value="tRNA_U5-meth_tr"/>
    <property type="match status" value="1"/>
</dbReference>
<dbReference type="SUPFAM" id="SSF50249">
    <property type="entry name" value="Nucleic acid-binding proteins"/>
    <property type="match status" value="1"/>
</dbReference>
<dbReference type="SUPFAM" id="SSF53335">
    <property type="entry name" value="S-adenosyl-L-methionine-dependent methyltransferases"/>
    <property type="match status" value="1"/>
</dbReference>
<dbReference type="PROSITE" id="PS51687">
    <property type="entry name" value="SAM_MT_RNA_M5U"/>
    <property type="match status" value="1"/>
</dbReference>
<dbReference type="PROSITE" id="PS50926">
    <property type="entry name" value="TRAM"/>
    <property type="match status" value="1"/>
</dbReference>
<dbReference type="PROSITE" id="PS01230">
    <property type="entry name" value="TRMA_1"/>
    <property type="match status" value="1"/>
</dbReference>
<dbReference type="PROSITE" id="PS01231">
    <property type="entry name" value="TRMA_2"/>
    <property type="match status" value="1"/>
</dbReference>
<keyword id="KW-0004">4Fe-4S</keyword>
<keyword id="KW-0408">Iron</keyword>
<keyword id="KW-0411">Iron-sulfur</keyword>
<keyword id="KW-0479">Metal-binding</keyword>
<keyword id="KW-0489">Methyltransferase</keyword>
<keyword id="KW-1185">Reference proteome</keyword>
<keyword id="KW-0698">rRNA processing</keyword>
<keyword id="KW-0949">S-adenosyl-L-methionine</keyword>
<keyword id="KW-0808">Transferase</keyword>
<sequence length="432" mass="48152">MAQFYSAKRRVTTREIITVTTDGLDAFGQGVARHHGKALFIAGLLPGERAEVVLSEDKKQFARGDVKKRLSESPERETPRCPHFGVCGGCQQQHASVALQQRSKAQALCRMMKREVDEVISGPAWGYRRRARLSLNFTPRKPGLQMGFRKAGSNDLVDVHRCPVLVPRLEALLPKLRDCLSSLDGVRHLGHVELVDVTSGPLMVLRHLKPLSAADREKLECFSHSEGVALYLAPQSDTLEHLNGEMPWYESDGLRLTFSPRDFIQVNDAVNQQMVARALEWLEIQPGERVLDLFCGMGNFTLPLARRAESVVGVEGVAALVEKGDYNAGLNALKNVTFFQHNLEEDVTRQPWAQQGFDKVLLDPARAGAAGVMQHIVKLKPRRVVYVSCNPATLMRDSETLLAAGYRTVRLAMLDMFPHTGHLESMALFERD</sequence>
<comment type="function">
    <text evidence="1">Catalyzes the formation of 5-methyl-uridine at position 1939 (m5U1939) in 23S rRNA.</text>
</comment>
<comment type="catalytic activity">
    <reaction evidence="1">
        <text>uridine(1939) in 23S rRNA + S-adenosyl-L-methionine = 5-methyluridine(1939) in 23S rRNA + S-adenosyl-L-homocysteine + H(+)</text>
        <dbReference type="Rhea" id="RHEA:42908"/>
        <dbReference type="Rhea" id="RHEA-COMP:10278"/>
        <dbReference type="Rhea" id="RHEA-COMP:10279"/>
        <dbReference type="ChEBI" id="CHEBI:15378"/>
        <dbReference type="ChEBI" id="CHEBI:57856"/>
        <dbReference type="ChEBI" id="CHEBI:59789"/>
        <dbReference type="ChEBI" id="CHEBI:65315"/>
        <dbReference type="ChEBI" id="CHEBI:74447"/>
        <dbReference type="EC" id="2.1.1.190"/>
    </reaction>
</comment>
<comment type="similarity">
    <text evidence="1">Belongs to the class I-like SAM-binding methyltransferase superfamily. RNA M5U methyltransferase family. RlmD subfamily.</text>
</comment>
<reference key="1">
    <citation type="journal article" date="2010" name="PLoS ONE">
        <title>Genome sequence of Cronobacter sakazakii BAA-894 and comparative genomic hybridization analysis with other Cronobacter species.</title>
        <authorList>
            <person name="Kucerova E."/>
            <person name="Clifton S.W."/>
            <person name="Xia X.Q."/>
            <person name="Long F."/>
            <person name="Porwollik S."/>
            <person name="Fulton L."/>
            <person name="Fronick C."/>
            <person name="Minx P."/>
            <person name="Kyung K."/>
            <person name="Warren W."/>
            <person name="Fulton R."/>
            <person name="Feng D."/>
            <person name="Wollam A."/>
            <person name="Shah N."/>
            <person name="Bhonagiri V."/>
            <person name="Nash W.E."/>
            <person name="Hallsworth-Pepin K."/>
            <person name="Wilson R.K."/>
            <person name="McClelland M."/>
            <person name="Forsythe S.J."/>
        </authorList>
    </citation>
    <scope>NUCLEOTIDE SEQUENCE [LARGE SCALE GENOMIC DNA]</scope>
    <source>
        <strain>ATCC BAA-894</strain>
    </source>
</reference>
<evidence type="ECO:0000255" key="1">
    <source>
        <dbReference type="HAMAP-Rule" id="MF_01010"/>
    </source>
</evidence>
<proteinExistence type="inferred from homology"/>
<accession>A7MQZ8</accession>
<name>RLMD_CROS8</name>
<protein>
    <recommendedName>
        <fullName evidence="1">23S rRNA (uracil(1939)-C(5))-methyltransferase RlmD</fullName>
        <ecNumber evidence="1">2.1.1.190</ecNumber>
    </recommendedName>
    <alternativeName>
        <fullName evidence="1">23S rRNA(m5U1939)-methyltransferase</fullName>
    </alternativeName>
</protein>